<sequence>MLIVGLGNPGANYERTRHNIGFMVIDELVKKQNAQKISSSFDGTLFKFSNHFLLKPLTFMNLSGSAIRDVKQFYKIDEVVVIHDDLDLPFGTLRFKKGGGHGGHNGLRSTDEHISKEYIRVRMGIGKPEHKGEVASYVLSNFTKDEQAHLDEFITFTCKAIEALLTNTLEDVSSKYTIKNFPLK</sequence>
<evidence type="ECO:0000255" key="1">
    <source>
        <dbReference type="HAMAP-Rule" id="MF_00083"/>
    </source>
</evidence>
<comment type="function">
    <text evidence="1">Hydrolyzes ribosome-free peptidyl-tRNAs (with 1 or more amino acids incorporated), which drop off the ribosome during protein synthesis, or as a result of ribosome stalling.</text>
</comment>
<comment type="function">
    <text evidence="1">Catalyzes the release of premature peptidyl moieties from peptidyl-tRNA molecules trapped in stalled 50S ribosomal subunits, and thus maintains levels of free tRNAs and 50S ribosomes.</text>
</comment>
<comment type="catalytic activity">
    <reaction evidence="1">
        <text>an N-acyl-L-alpha-aminoacyl-tRNA + H2O = an N-acyl-L-amino acid + a tRNA + H(+)</text>
        <dbReference type="Rhea" id="RHEA:54448"/>
        <dbReference type="Rhea" id="RHEA-COMP:10123"/>
        <dbReference type="Rhea" id="RHEA-COMP:13883"/>
        <dbReference type="ChEBI" id="CHEBI:15377"/>
        <dbReference type="ChEBI" id="CHEBI:15378"/>
        <dbReference type="ChEBI" id="CHEBI:59874"/>
        <dbReference type="ChEBI" id="CHEBI:78442"/>
        <dbReference type="ChEBI" id="CHEBI:138191"/>
        <dbReference type="EC" id="3.1.1.29"/>
    </reaction>
</comment>
<comment type="subunit">
    <text evidence="1">Monomer.</text>
</comment>
<comment type="subcellular location">
    <subcellularLocation>
        <location evidence="1">Cytoplasm</location>
    </subcellularLocation>
</comment>
<comment type="similarity">
    <text evidence="1">Belongs to the PTH family.</text>
</comment>
<feature type="chain" id="PRO_0000264134" description="Peptidyl-tRNA hydrolase">
    <location>
        <begin position="1"/>
        <end position="184"/>
    </location>
</feature>
<feature type="active site" description="Proton acceptor" evidence="1">
    <location>
        <position position="18"/>
    </location>
</feature>
<feature type="binding site" evidence="1">
    <location>
        <position position="13"/>
    </location>
    <ligand>
        <name>tRNA</name>
        <dbReference type="ChEBI" id="CHEBI:17843"/>
    </ligand>
</feature>
<feature type="binding site" evidence="1">
    <location>
        <position position="59"/>
    </location>
    <ligand>
        <name>tRNA</name>
        <dbReference type="ChEBI" id="CHEBI:17843"/>
    </ligand>
</feature>
<feature type="binding site" evidence="1">
    <location>
        <position position="61"/>
    </location>
    <ligand>
        <name>tRNA</name>
        <dbReference type="ChEBI" id="CHEBI:17843"/>
    </ligand>
</feature>
<feature type="binding site" evidence="1">
    <location>
        <position position="105"/>
    </location>
    <ligand>
        <name>tRNA</name>
        <dbReference type="ChEBI" id="CHEBI:17843"/>
    </ligand>
</feature>
<feature type="site" description="Discriminates between blocked and unblocked aminoacyl-tRNA" evidence="1">
    <location>
        <position position="8"/>
    </location>
</feature>
<feature type="site" description="Stabilizes the basic form of H active site to accept a proton" evidence="1">
    <location>
        <position position="84"/>
    </location>
</feature>
<gene>
    <name evidence="1" type="primary">pth</name>
    <name type="ordered locus">Suden_0466</name>
</gene>
<name>PTH_SULDN</name>
<proteinExistence type="inferred from homology"/>
<protein>
    <recommendedName>
        <fullName evidence="1">Peptidyl-tRNA hydrolase</fullName>
        <shortName evidence="1">Pth</shortName>
        <ecNumber evidence="1">3.1.1.29</ecNumber>
    </recommendedName>
</protein>
<accession>Q30TD4</accession>
<keyword id="KW-0963">Cytoplasm</keyword>
<keyword id="KW-0378">Hydrolase</keyword>
<keyword id="KW-1185">Reference proteome</keyword>
<keyword id="KW-0694">RNA-binding</keyword>
<keyword id="KW-0820">tRNA-binding</keyword>
<organism>
    <name type="scientific">Sulfurimonas denitrificans (strain ATCC 33889 / DSM 1251)</name>
    <name type="common">Thiomicrospira denitrificans (strain ATCC 33889 / DSM 1251)</name>
    <dbReference type="NCBI Taxonomy" id="326298"/>
    <lineage>
        <taxon>Bacteria</taxon>
        <taxon>Pseudomonadati</taxon>
        <taxon>Campylobacterota</taxon>
        <taxon>Epsilonproteobacteria</taxon>
        <taxon>Campylobacterales</taxon>
        <taxon>Sulfurimonadaceae</taxon>
        <taxon>Sulfurimonas</taxon>
    </lineage>
</organism>
<reference key="1">
    <citation type="journal article" date="2008" name="Appl. Environ. Microbiol.">
        <title>Genome of the epsilonproteobacterial chemolithoautotroph Sulfurimonas denitrificans.</title>
        <authorList>
            <person name="Sievert S.M."/>
            <person name="Scott K.M."/>
            <person name="Klotz M.G."/>
            <person name="Chain P.S.G."/>
            <person name="Hauser L.J."/>
            <person name="Hemp J."/>
            <person name="Huegler M."/>
            <person name="Land M."/>
            <person name="Lapidus A."/>
            <person name="Larimer F.W."/>
            <person name="Lucas S."/>
            <person name="Malfatti S.A."/>
            <person name="Meyer F."/>
            <person name="Paulsen I.T."/>
            <person name="Ren Q."/>
            <person name="Simon J."/>
            <person name="Bailey K."/>
            <person name="Diaz E."/>
            <person name="Fitzpatrick K.A."/>
            <person name="Glover B."/>
            <person name="Gwatney N."/>
            <person name="Korajkic A."/>
            <person name="Long A."/>
            <person name="Mobberley J.M."/>
            <person name="Pantry S.N."/>
            <person name="Pazder G."/>
            <person name="Peterson S."/>
            <person name="Quintanilla J.D."/>
            <person name="Sprinkle R."/>
            <person name="Stephens J."/>
            <person name="Thomas P."/>
            <person name="Vaughn R."/>
            <person name="Weber M.J."/>
            <person name="Wooten L.L."/>
        </authorList>
    </citation>
    <scope>NUCLEOTIDE SEQUENCE [LARGE SCALE GENOMIC DNA]</scope>
    <source>
        <strain>ATCC 33889 / DSM 1251</strain>
    </source>
</reference>
<dbReference type="EC" id="3.1.1.29" evidence="1"/>
<dbReference type="EMBL" id="CP000153">
    <property type="protein sequence ID" value="ABB43747.1"/>
    <property type="molecule type" value="Genomic_DNA"/>
</dbReference>
<dbReference type="RefSeq" id="WP_011372101.1">
    <property type="nucleotide sequence ID" value="NC_007575.1"/>
</dbReference>
<dbReference type="SMR" id="Q30TD4"/>
<dbReference type="STRING" id="326298.Suden_0466"/>
<dbReference type="KEGG" id="tdn:Suden_0466"/>
<dbReference type="eggNOG" id="COG0193">
    <property type="taxonomic scope" value="Bacteria"/>
</dbReference>
<dbReference type="HOGENOM" id="CLU_062456_4_1_7"/>
<dbReference type="OrthoDB" id="9800507at2"/>
<dbReference type="Proteomes" id="UP000002714">
    <property type="component" value="Chromosome"/>
</dbReference>
<dbReference type="GO" id="GO:0005737">
    <property type="term" value="C:cytoplasm"/>
    <property type="evidence" value="ECO:0007669"/>
    <property type="project" value="UniProtKB-SubCell"/>
</dbReference>
<dbReference type="GO" id="GO:0004045">
    <property type="term" value="F:peptidyl-tRNA hydrolase activity"/>
    <property type="evidence" value="ECO:0007669"/>
    <property type="project" value="UniProtKB-UniRule"/>
</dbReference>
<dbReference type="GO" id="GO:0000049">
    <property type="term" value="F:tRNA binding"/>
    <property type="evidence" value="ECO:0007669"/>
    <property type="project" value="UniProtKB-UniRule"/>
</dbReference>
<dbReference type="GO" id="GO:0006515">
    <property type="term" value="P:protein quality control for misfolded or incompletely synthesized proteins"/>
    <property type="evidence" value="ECO:0007669"/>
    <property type="project" value="UniProtKB-UniRule"/>
</dbReference>
<dbReference type="GO" id="GO:0072344">
    <property type="term" value="P:rescue of stalled ribosome"/>
    <property type="evidence" value="ECO:0007669"/>
    <property type="project" value="UniProtKB-UniRule"/>
</dbReference>
<dbReference type="CDD" id="cd00462">
    <property type="entry name" value="PTH"/>
    <property type="match status" value="1"/>
</dbReference>
<dbReference type="FunFam" id="3.40.50.1470:FF:000001">
    <property type="entry name" value="Peptidyl-tRNA hydrolase"/>
    <property type="match status" value="1"/>
</dbReference>
<dbReference type="Gene3D" id="3.40.50.1470">
    <property type="entry name" value="Peptidyl-tRNA hydrolase"/>
    <property type="match status" value="1"/>
</dbReference>
<dbReference type="HAMAP" id="MF_00083">
    <property type="entry name" value="Pept_tRNA_hydro_bact"/>
    <property type="match status" value="1"/>
</dbReference>
<dbReference type="InterPro" id="IPR001328">
    <property type="entry name" value="Pept_tRNA_hydro"/>
</dbReference>
<dbReference type="InterPro" id="IPR018171">
    <property type="entry name" value="Pept_tRNA_hydro_CS"/>
</dbReference>
<dbReference type="InterPro" id="IPR036416">
    <property type="entry name" value="Pept_tRNA_hydro_sf"/>
</dbReference>
<dbReference type="NCBIfam" id="TIGR00447">
    <property type="entry name" value="pth"/>
    <property type="match status" value="1"/>
</dbReference>
<dbReference type="PANTHER" id="PTHR17224">
    <property type="entry name" value="PEPTIDYL-TRNA HYDROLASE"/>
    <property type="match status" value="1"/>
</dbReference>
<dbReference type="PANTHER" id="PTHR17224:SF1">
    <property type="entry name" value="PEPTIDYL-TRNA HYDROLASE"/>
    <property type="match status" value="1"/>
</dbReference>
<dbReference type="Pfam" id="PF01195">
    <property type="entry name" value="Pept_tRNA_hydro"/>
    <property type="match status" value="1"/>
</dbReference>
<dbReference type="SUPFAM" id="SSF53178">
    <property type="entry name" value="Peptidyl-tRNA hydrolase-like"/>
    <property type="match status" value="1"/>
</dbReference>
<dbReference type="PROSITE" id="PS01195">
    <property type="entry name" value="PEPT_TRNA_HYDROL_1"/>
    <property type="match status" value="1"/>
</dbReference>
<dbReference type="PROSITE" id="PS01196">
    <property type="entry name" value="PEPT_TRNA_HYDROL_2"/>
    <property type="match status" value="1"/>
</dbReference>